<comment type="function">
    <text evidence="1">Molecular chaperone; assists the folding of proteins upon ATP hydrolysis. Known to play a role, in vitro, in the folding of actin and tubulin (By similarity).</text>
</comment>
<comment type="subunit">
    <text evidence="1">Heterooligomeric complex of about 850 to 900 kDa that forms two stacked rings, 12 to 16 nm in diameter.</text>
</comment>
<comment type="subcellular location">
    <subcellularLocation>
        <location evidence="1">Cytoplasm</location>
    </subcellularLocation>
</comment>
<comment type="developmental stage">
    <text evidence="2">Expressed in both sexually mature and immature cells at the growth phase.</text>
</comment>
<comment type="similarity">
    <text evidence="3">Belongs to the TCP-1 chaperonin family.</text>
</comment>
<proteinExistence type="evidence at transcript level"/>
<keyword id="KW-0067">ATP-binding</keyword>
<keyword id="KW-0143">Chaperone</keyword>
<keyword id="KW-0963">Cytoplasm</keyword>
<keyword id="KW-0547">Nucleotide-binding</keyword>
<keyword id="KW-1185">Reference proteome</keyword>
<evidence type="ECO:0000250" key="1"/>
<evidence type="ECO:0000269" key="2">
    <source>
    </source>
</evidence>
<evidence type="ECO:0000305" key="3"/>
<gene>
    <name type="primary">tcp1</name>
    <name type="ORF">DDB_G0269190</name>
</gene>
<protein>
    <recommendedName>
        <fullName>T-complex protein 1 subunit alpha</fullName>
        <shortName>TCP-1-alpha</shortName>
    </recommendedName>
    <alternativeName>
        <fullName>CCT-alpha</fullName>
    </alternativeName>
    <alternativeName>
        <fullName>DdTcp-1</fullName>
    </alternativeName>
</protein>
<dbReference type="EMBL" id="AB008158">
    <property type="protein sequence ID" value="BAA32082.1"/>
    <property type="molecule type" value="mRNA"/>
</dbReference>
<dbReference type="EMBL" id="AAFI02000005">
    <property type="protein sequence ID" value="EAL71945.1"/>
    <property type="molecule type" value="Genomic_DNA"/>
</dbReference>
<dbReference type="PIR" id="T43895">
    <property type="entry name" value="T43895"/>
</dbReference>
<dbReference type="RefSeq" id="XP_646807.1">
    <property type="nucleotide sequence ID" value="XM_641715.1"/>
</dbReference>
<dbReference type="SMR" id="Q55BM4"/>
<dbReference type="FunCoup" id="Q55BM4">
    <property type="interactions" value="1068"/>
</dbReference>
<dbReference type="STRING" id="44689.Q55BM4"/>
<dbReference type="PaxDb" id="44689-DDB0191128"/>
<dbReference type="EnsemblProtists" id="EAL71945">
    <property type="protein sequence ID" value="EAL71945"/>
    <property type="gene ID" value="DDB_G0269190"/>
</dbReference>
<dbReference type="GeneID" id="8617780"/>
<dbReference type="KEGG" id="ddi:DDB_G0269190"/>
<dbReference type="dictyBase" id="DDB_G0269190">
    <property type="gene designation" value="tcp1"/>
</dbReference>
<dbReference type="VEuPathDB" id="AmoebaDB:DDB_G0269190"/>
<dbReference type="eggNOG" id="KOG0360">
    <property type="taxonomic scope" value="Eukaryota"/>
</dbReference>
<dbReference type="HOGENOM" id="CLU_008891_5_1_1"/>
<dbReference type="InParanoid" id="Q55BM4"/>
<dbReference type="OMA" id="RGPNDYQ"/>
<dbReference type="PhylomeDB" id="Q55BM4"/>
<dbReference type="BRENDA" id="3.6.4.B10">
    <property type="organism ID" value="1939"/>
</dbReference>
<dbReference type="Reactome" id="R-DDI-390471">
    <property type="pathway name" value="Association of TriC/CCT with target proteins during biosynthesis"/>
</dbReference>
<dbReference type="Reactome" id="R-DDI-6814122">
    <property type="pathway name" value="Cooperation of PDCL (PhLP1) and TRiC/CCT in G-protein beta folding"/>
</dbReference>
<dbReference type="PRO" id="PR:Q55BM4"/>
<dbReference type="Proteomes" id="UP000002195">
    <property type="component" value="Chromosome 1"/>
</dbReference>
<dbReference type="GO" id="GO:0005832">
    <property type="term" value="C:chaperonin-containing T-complex"/>
    <property type="evidence" value="ECO:0000250"/>
    <property type="project" value="dictyBase"/>
</dbReference>
<dbReference type="GO" id="GO:0045335">
    <property type="term" value="C:phagocytic vesicle"/>
    <property type="evidence" value="ECO:0007005"/>
    <property type="project" value="dictyBase"/>
</dbReference>
<dbReference type="GO" id="GO:0005524">
    <property type="term" value="F:ATP binding"/>
    <property type="evidence" value="ECO:0007669"/>
    <property type="project" value="UniProtKB-KW"/>
</dbReference>
<dbReference type="GO" id="GO:0016887">
    <property type="term" value="F:ATP hydrolysis activity"/>
    <property type="evidence" value="ECO:0007669"/>
    <property type="project" value="InterPro"/>
</dbReference>
<dbReference type="GO" id="GO:0140662">
    <property type="term" value="F:ATP-dependent protein folding chaperone"/>
    <property type="evidence" value="ECO:0007669"/>
    <property type="project" value="InterPro"/>
</dbReference>
<dbReference type="GO" id="GO:0051082">
    <property type="term" value="F:unfolded protein binding"/>
    <property type="evidence" value="ECO:0000318"/>
    <property type="project" value="GO_Central"/>
</dbReference>
<dbReference type="GO" id="GO:0006457">
    <property type="term" value="P:protein folding"/>
    <property type="evidence" value="ECO:0000318"/>
    <property type="project" value="GO_Central"/>
</dbReference>
<dbReference type="GO" id="GO:0030587">
    <property type="term" value="P:sorocarp development"/>
    <property type="evidence" value="ECO:0000315"/>
    <property type="project" value="dictyBase"/>
</dbReference>
<dbReference type="CDD" id="cd03335">
    <property type="entry name" value="TCP1_alpha"/>
    <property type="match status" value="1"/>
</dbReference>
<dbReference type="FunFam" id="3.50.7.10:FF:000009">
    <property type="entry name" value="T-complex protein 1 subunit alpha"/>
    <property type="match status" value="1"/>
</dbReference>
<dbReference type="Gene3D" id="3.50.7.10">
    <property type="entry name" value="GroEL"/>
    <property type="match status" value="1"/>
</dbReference>
<dbReference type="Gene3D" id="1.10.560.10">
    <property type="entry name" value="GroEL-like equatorial domain"/>
    <property type="match status" value="1"/>
</dbReference>
<dbReference type="Gene3D" id="3.30.260.10">
    <property type="entry name" value="TCP-1-like chaperonin intermediate domain"/>
    <property type="match status" value="1"/>
</dbReference>
<dbReference type="InterPro" id="IPR012715">
    <property type="entry name" value="Chap_CCT_alpha"/>
</dbReference>
<dbReference type="InterPro" id="IPR017998">
    <property type="entry name" value="Chaperone_TCP-1"/>
</dbReference>
<dbReference type="InterPro" id="IPR002194">
    <property type="entry name" value="Chaperonin_TCP-1_CS"/>
</dbReference>
<dbReference type="InterPro" id="IPR002423">
    <property type="entry name" value="Cpn60/GroEL/TCP-1"/>
</dbReference>
<dbReference type="InterPro" id="IPR027409">
    <property type="entry name" value="GroEL-like_apical_dom_sf"/>
</dbReference>
<dbReference type="InterPro" id="IPR027413">
    <property type="entry name" value="GROEL-like_equatorial_sf"/>
</dbReference>
<dbReference type="InterPro" id="IPR027410">
    <property type="entry name" value="TCP-1-like_intermed_sf"/>
</dbReference>
<dbReference type="InterPro" id="IPR053374">
    <property type="entry name" value="TCP-1_chaperonin"/>
</dbReference>
<dbReference type="InterPro" id="IPR054827">
    <property type="entry name" value="thermosome_alpha"/>
</dbReference>
<dbReference type="NCBIfam" id="TIGR02340">
    <property type="entry name" value="chap_CCT_alpha"/>
    <property type="match status" value="1"/>
</dbReference>
<dbReference type="NCBIfam" id="NF041082">
    <property type="entry name" value="thermosome_alpha"/>
    <property type="match status" value="1"/>
</dbReference>
<dbReference type="NCBIfam" id="NF041083">
    <property type="entry name" value="thermosome_beta"/>
    <property type="match status" value="1"/>
</dbReference>
<dbReference type="PANTHER" id="PTHR11353">
    <property type="entry name" value="CHAPERONIN"/>
    <property type="match status" value="1"/>
</dbReference>
<dbReference type="Pfam" id="PF00118">
    <property type="entry name" value="Cpn60_TCP1"/>
    <property type="match status" value="1"/>
</dbReference>
<dbReference type="PRINTS" id="PR00304">
    <property type="entry name" value="TCOMPLEXTCP1"/>
</dbReference>
<dbReference type="SUPFAM" id="SSF52029">
    <property type="entry name" value="GroEL apical domain-like"/>
    <property type="match status" value="1"/>
</dbReference>
<dbReference type="SUPFAM" id="SSF48592">
    <property type="entry name" value="GroEL equatorial domain-like"/>
    <property type="match status" value="1"/>
</dbReference>
<dbReference type="SUPFAM" id="SSF54849">
    <property type="entry name" value="GroEL-intermediate domain like"/>
    <property type="match status" value="1"/>
</dbReference>
<dbReference type="PROSITE" id="PS00750">
    <property type="entry name" value="TCP1_1"/>
    <property type="match status" value="1"/>
</dbReference>
<dbReference type="PROSITE" id="PS00751">
    <property type="entry name" value="TCP1_2"/>
    <property type="match status" value="1"/>
</dbReference>
<dbReference type="PROSITE" id="PS00995">
    <property type="entry name" value="TCP1_3"/>
    <property type="match status" value="1"/>
</dbReference>
<organism>
    <name type="scientific">Dictyostelium discoideum</name>
    <name type="common">Social amoeba</name>
    <dbReference type="NCBI Taxonomy" id="44689"/>
    <lineage>
        <taxon>Eukaryota</taxon>
        <taxon>Amoebozoa</taxon>
        <taxon>Evosea</taxon>
        <taxon>Eumycetozoa</taxon>
        <taxon>Dictyostelia</taxon>
        <taxon>Dictyosteliales</taxon>
        <taxon>Dictyosteliaceae</taxon>
        <taxon>Dictyostelium</taxon>
    </lineage>
</organism>
<sequence length="548" mass="59406">MSNKVLMIDGDRISGNEVRAQNVLAVTAIANIVKTSFGPIGLDKMLIDNIGSIVVTNDGATILQKIDIEHPAAKILVQLSELQDQEVGDGTTTVVILAAELLKRANELVARKVHPTVIISGFRLACTEAIKYINETLAVKVETLPKDFIVNIAKTSMSSKTINDDSDFFSKIVIEAITRVKTIDYKGDVKYPINAINILKAHGKSAKESTLVEGYALNCTVASEGMPKRIQGAKIAFLDFNLAKTKMKLGQKVVVTNVNDLEAIRDRENDIVKERISLIIKSGANVVLTTKGIDDLCLKYFVEAGCMAVRRCKKEDLKRIAKSCGGTVLITLANLEGEESFDTTALGIADEVVQDRLADDELIIVKNSNKKSASIILRGANELMLDEMERSIHDSLCIVKRTLESGTIVPGGGAVESALSIYLDNIAATMGSRKQLAISEFAESLLVVPKQLAVNAALDASDLVSKLKAYHHAAQTDPSKKSYAYSGLDLFNNKVRNNLEAGVLEPAIAKIKCIKFATESAITILRIDDKITLNPREQQGGDHEGHGH</sequence>
<accession>Q55BM4</accession>
<accession>O76126</accession>
<reference key="1">
    <citation type="journal article" date="1998" name="Gene">
        <title>A Dictyostelium discoideum homologue to Tcp-1 is essential for growth and development.</title>
        <authorList>
            <person name="Iijima M."/>
            <person name="Shimizu H."/>
            <person name="Tanaka Y."/>
            <person name="Urushihara H."/>
        </authorList>
    </citation>
    <scope>NUCLEOTIDE SEQUENCE [MRNA]</scope>
    <scope>DEVELOPMENTAL STAGE</scope>
    <source>
        <strain>AX3-1</strain>
    </source>
</reference>
<reference key="2">
    <citation type="journal article" date="2005" name="Nature">
        <title>The genome of the social amoeba Dictyostelium discoideum.</title>
        <authorList>
            <person name="Eichinger L."/>
            <person name="Pachebat J.A."/>
            <person name="Gloeckner G."/>
            <person name="Rajandream M.A."/>
            <person name="Sucgang R."/>
            <person name="Berriman M."/>
            <person name="Song J."/>
            <person name="Olsen R."/>
            <person name="Szafranski K."/>
            <person name="Xu Q."/>
            <person name="Tunggal B."/>
            <person name="Kummerfeld S."/>
            <person name="Madera M."/>
            <person name="Konfortov B.A."/>
            <person name="Rivero F."/>
            <person name="Bankier A.T."/>
            <person name="Lehmann R."/>
            <person name="Hamlin N."/>
            <person name="Davies R."/>
            <person name="Gaudet P."/>
            <person name="Fey P."/>
            <person name="Pilcher K."/>
            <person name="Chen G."/>
            <person name="Saunders D."/>
            <person name="Sodergren E.J."/>
            <person name="Davis P."/>
            <person name="Kerhornou A."/>
            <person name="Nie X."/>
            <person name="Hall N."/>
            <person name="Anjard C."/>
            <person name="Hemphill L."/>
            <person name="Bason N."/>
            <person name="Farbrother P."/>
            <person name="Desany B."/>
            <person name="Just E."/>
            <person name="Morio T."/>
            <person name="Rost R."/>
            <person name="Churcher C.M."/>
            <person name="Cooper J."/>
            <person name="Haydock S."/>
            <person name="van Driessche N."/>
            <person name="Cronin A."/>
            <person name="Goodhead I."/>
            <person name="Muzny D.M."/>
            <person name="Mourier T."/>
            <person name="Pain A."/>
            <person name="Lu M."/>
            <person name="Harper D."/>
            <person name="Lindsay R."/>
            <person name="Hauser H."/>
            <person name="James K.D."/>
            <person name="Quiles M."/>
            <person name="Madan Babu M."/>
            <person name="Saito T."/>
            <person name="Buchrieser C."/>
            <person name="Wardroper A."/>
            <person name="Felder M."/>
            <person name="Thangavelu M."/>
            <person name="Johnson D."/>
            <person name="Knights A."/>
            <person name="Loulseged H."/>
            <person name="Mungall K.L."/>
            <person name="Oliver K."/>
            <person name="Price C."/>
            <person name="Quail M.A."/>
            <person name="Urushihara H."/>
            <person name="Hernandez J."/>
            <person name="Rabbinowitsch E."/>
            <person name="Steffen D."/>
            <person name="Sanders M."/>
            <person name="Ma J."/>
            <person name="Kohara Y."/>
            <person name="Sharp S."/>
            <person name="Simmonds M.N."/>
            <person name="Spiegler S."/>
            <person name="Tivey A."/>
            <person name="Sugano S."/>
            <person name="White B."/>
            <person name="Walker D."/>
            <person name="Woodward J.R."/>
            <person name="Winckler T."/>
            <person name="Tanaka Y."/>
            <person name="Shaulsky G."/>
            <person name="Schleicher M."/>
            <person name="Weinstock G.M."/>
            <person name="Rosenthal A."/>
            <person name="Cox E.C."/>
            <person name="Chisholm R.L."/>
            <person name="Gibbs R.A."/>
            <person name="Loomis W.F."/>
            <person name="Platzer M."/>
            <person name="Kay R.R."/>
            <person name="Williams J.G."/>
            <person name="Dear P.H."/>
            <person name="Noegel A.A."/>
            <person name="Barrell B.G."/>
            <person name="Kuspa A."/>
        </authorList>
    </citation>
    <scope>NUCLEOTIDE SEQUENCE [LARGE SCALE GENOMIC DNA]</scope>
    <source>
        <strain>AX4</strain>
    </source>
</reference>
<feature type="chain" id="PRO_0000327895" description="T-complex protein 1 subunit alpha">
    <location>
        <begin position="1"/>
        <end position="548"/>
    </location>
</feature>
<feature type="sequence conflict" description="In Ref. 1; BAA32082." evidence="3" ref="1">
    <original>M</original>
    <variation>L</variation>
    <location>
        <position position="247"/>
    </location>
</feature>
<feature type="sequence conflict" description="In Ref. 1; BAA32082." evidence="3" ref="1">
    <original>V</original>
    <variation>I</variation>
    <location>
        <position position="254"/>
    </location>
</feature>
<feature type="sequence conflict" description="In Ref. 1; BAA32082." evidence="3" ref="1">
    <original>N</original>
    <variation>T</variation>
    <location>
        <position position="285"/>
    </location>
</feature>
<name>TCPA_DICDI</name>